<evidence type="ECO:0000255" key="1">
    <source>
        <dbReference type="HAMAP-Rule" id="MF_00156"/>
    </source>
</evidence>
<evidence type="ECO:0000256" key="2">
    <source>
        <dbReference type="SAM" id="MobiDB-lite"/>
    </source>
</evidence>
<organism>
    <name type="scientific">Erythrobacter litoralis (strain HTCC2594)</name>
    <dbReference type="NCBI Taxonomy" id="314225"/>
    <lineage>
        <taxon>Bacteria</taxon>
        <taxon>Pseudomonadati</taxon>
        <taxon>Pseudomonadota</taxon>
        <taxon>Alphaproteobacteria</taxon>
        <taxon>Sphingomonadales</taxon>
        <taxon>Erythrobacteraceae</taxon>
        <taxon>Erythrobacter/Porphyrobacter group</taxon>
        <taxon>Erythrobacter</taxon>
    </lineage>
</organism>
<protein>
    <recommendedName>
        <fullName evidence="1">3-methyl-2-oxobutanoate hydroxymethyltransferase</fullName>
        <ecNumber evidence="1">2.1.2.11</ecNumber>
    </recommendedName>
    <alternativeName>
        <fullName evidence="1">Ketopantoate hydroxymethyltransferase</fullName>
        <shortName evidence="1">KPHMT</shortName>
    </alternativeName>
</protein>
<reference key="1">
    <citation type="journal article" date="2009" name="J. Bacteriol.">
        <title>Complete genome sequence of Erythrobacter litoralis HTCC2594.</title>
        <authorList>
            <person name="Oh H.M."/>
            <person name="Giovannoni S.J."/>
            <person name="Ferriera S."/>
            <person name="Johnson J."/>
            <person name="Cho J.C."/>
        </authorList>
    </citation>
    <scope>NUCLEOTIDE SEQUENCE [LARGE SCALE GENOMIC DNA]</scope>
    <source>
        <strain>HTCC2594</strain>
    </source>
</reference>
<sequence>MSTTFKLDTSTSRANPTPAPMKRLTVPKIRARKKDGKTEEPLVMLTAYTARQAQLLDAHCDLLLVGDSLGQVIYGLPSTIPVTLRMMADHAAAVVRGSYHSVVVVDMPFGSYEQSPQQAFESASFLLKESGAAAVKLEGGEAMAETVAFLNQRGIPVMGHVGLTPQAVNVLGGYAARGRNDAEADKIVTDAKALDDAGAFAIVIEGVLEPIAVAATEAVRAPTIGIGASAQCDGQVLVTEDMLGMFERVPRFVKKYGDIAETIEATAKTYAEEVRARSFPGPEQLYQPK</sequence>
<accession>Q2NAY0</accession>
<keyword id="KW-0963">Cytoplasm</keyword>
<keyword id="KW-0460">Magnesium</keyword>
<keyword id="KW-0479">Metal-binding</keyword>
<keyword id="KW-0566">Pantothenate biosynthesis</keyword>
<keyword id="KW-1185">Reference proteome</keyword>
<keyword id="KW-0808">Transferase</keyword>
<gene>
    <name evidence="1" type="primary">panB</name>
    <name type="ordered locus">ELI_05345</name>
</gene>
<proteinExistence type="inferred from homology"/>
<name>PANB_ERYLH</name>
<feature type="chain" id="PRO_0000297263" description="3-methyl-2-oxobutanoate hydroxymethyltransferase">
    <location>
        <begin position="1"/>
        <end position="289"/>
    </location>
</feature>
<feature type="region of interest" description="Disordered" evidence="2">
    <location>
        <begin position="1"/>
        <end position="21"/>
    </location>
</feature>
<feature type="compositionally biased region" description="Polar residues" evidence="2">
    <location>
        <begin position="1"/>
        <end position="15"/>
    </location>
</feature>
<feature type="active site" description="Proton acceptor" evidence="1">
    <location>
        <position position="205"/>
    </location>
</feature>
<feature type="binding site" evidence="1">
    <location>
        <begin position="67"/>
        <end position="68"/>
    </location>
    <ligand>
        <name>3-methyl-2-oxobutanoate</name>
        <dbReference type="ChEBI" id="CHEBI:11851"/>
    </ligand>
</feature>
<feature type="binding site" evidence="1">
    <location>
        <position position="67"/>
    </location>
    <ligand>
        <name>Mg(2+)</name>
        <dbReference type="ChEBI" id="CHEBI:18420"/>
    </ligand>
</feature>
<feature type="binding site" evidence="1">
    <location>
        <position position="106"/>
    </location>
    <ligand>
        <name>3-methyl-2-oxobutanoate</name>
        <dbReference type="ChEBI" id="CHEBI:11851"/>
    </ligand>
</feature>
<feature type="binding site" evidence="1">
    <location>
        <position position="106"/>
    </location>
    <ligand>
        <name>Mg(2+)</name>
        <dbReference type="ChEBI" id="CHEBI:18420"/>
    </ligand>
</feature>
<feature type="binding site" evidence="1">
    <location>
        <position position="136"/>
    </location>
    <ligand>
        <name>3-methyl-2-oxobutanoate</name>
        <dbReference type="ChEBI" id="CHEBI:11851"/>
    </ligand>
</feature>
<feature type="binding site" evidence="1">
    <location>
        <position position="138"/>
    </location>
    <ligand>
        <name>Mg(2+)</name>
        <dbReference type="ChEBI" id="CHEBI:18420"/>
    </ligand>
</feature>
<comment type="function">
    <text evidence="1">Catalyzes the reversible reaction in which hydroxymethyl group from 5,10-methylenetetrahydrofolate is transferred onto alpha-ketoisovalerate to form ketopantoate.</text>
</comment>
<comment type="catalytic activity">
    <reaction evidence="1">
        <text>3-methyl-2-oxobutanoate + (6R)-5,10-methylene-5,6,7,8-tetrahydrofolate + H2O = 2-dehydropantoate + (6S)-5,6,7,8-tetrahydrofolate</text>
        <dbReference type="Rhea" id="RHEA:11824"/>
        <dbReference type="ChEBI" id="CHEBI:11561"/>
        <dbReference type="ChEBI" id="CHEBI:11851"/>
        <dbReference type="ChEBI" id="CHEBI:15377"/>
        <dbReference type="ChEBI" id="CHEBI:15636"/>
        <dbReference type="ChEBI" id="CHEBI:57453"/>
        <dbReference type="EC" id="2.1.2.11"/>
    </reaction>
</comment>
<comment type="cofactor">
    <cofactor evidence="1">
        <name>Mg(2+)</name>
        <dbReference type="ChEBI" id="CHEBI:18420"/>
    </cofactor>
    <text evidence="1">Binds 1 Mg(2+) ion per subunit.</text>
</comment>
<comment type="pathway">
    <text evidence="1">Cofactor biosynthesis; (R)-pantothenate biosynthesis; (R)-pantoate from 3-methyl-2-oxobutanoate: step 1/2.</text>
</comment>
<comment type="subunit">
    <text evidence="1">Homodecamer; pentamer of dimers.</text>
</comment>
<comment type="subcellular location">
    <subcellularLocation>
        <location evidence="1">Cytoplasm</location>
    </subcellularLocation>
</comment>
<comment type="similarity">
    <text evidence="1">Belongs to the PanB family.</text>
</comment>
<dbReference type="EC" id="2.1.2.11" evidence="1"/>
<dbReference type="EMBL" id="CP000157">
    <property type="protein sequence ID" value="ABC63161.1"/>
    <property type="molecule type" value="Genomic_DNA"/>
</dbReference>
<dbReference type="RefSeq" id="WP_011413997.1">
    <property type="nucleotide sequence ID" value="NC_007722.1"/>
</dbReference>
<dbReference type="SMR" id="Q2NAY0"/>
<dbReference type="STRING" id="314225.ELI_05345"/>
<dbReference type="KEGG" id="eli:ELI_05345"/>
<dbReference type="eggNOG" id="COG0413">
    <property type="taxonomic scope" value="Bacteria"/>
</dbReference>
<dbReference type="HOGENOM" id="CLU_036645_1_0_5"/>
<dbReference type="OrthoDB" id="9781789at2"/>
<dbReference type="UniPathway" id="UPA00028">
    <property type="reaction ID" value="UER00003"/>
</dbReference>
<dbReference type="Proteomes" id="UP000008808">
    <property type="component" value="Chromosome"/>
</dbReference>
<dbReference type="GO" id="GO:0005737">
    <property type="term" value="C:cytoplasm"/>
    <property type="evidence" value="ECO:0007669"/>
    <property type="project" value="UniProtKB-SubCell"/>
</dbReference>
<dbReference type="GO" id="GO:0003864">
    <property type="term" value="F:3-methyl-2-oxobutanoate hydroxymethyltransferase activity"/>
    <property type="evidence" value="ECO:0007669"/>
    <property type="project" value="UniProtKB-UniRule"/>
</dbReference>
<dbReference type="GO" id="GO:0000287">
    <property type="term" value="F:magnesium ion binding"/>
    <property type="evidence" value="ECO:0007669"/>
    <property type="project" value="TreeGrafter"/>
</dbReference>
<dbReference type="GO" id="GO:0015940">
    <property type="term" value="P:pantothenate biosynthetic process"/>
    <property type="evidence" value="ECO:0007669"/>
    <property type="project" value="UniProtKB-UniRule"/>
</dbReference>
<dbReference type="CDD" id="cd06557">
    <property type="entry name" value="KPHMT-like"/>
    <property type="match status" value="1"/>
</dbReference>
<dbReference type="FunFam" id="3.20.20.60:FF:000003">
    <property type="entry name" value="3-methyl-2-oxobutanoate hydroxymethyltransferase"/>
    <property type="match status" value="1"/>
</dbReference>
<dbReference type="Gene3D" id="3.20.20.60">
    <property type="entry name" value="Phosphoenolpyruvate-binding domains"/>
    <property type="match status" value="1"/>
</dbReference>
<dbReference type="HAMAP" id="MF_00156">
    <property type="entry name" value="PanB"/>
    <property type="match status" value="1"/>
</dbReference>
<dbReference type="InterPro" id="IPR003700">
    <property type="entry name" value="Pantoate_hydroxy_MeTrfase"/>
</dbReference>
<dbReference type="InterPro" id="IPR015813">
    <property type="entry name" value="Pyrv/PenolPyrv_kinase-like_dom"/>
</dbReference>
<dbReference type="InterPro" id="IPR040442">
    <property type="entry name" value="Pyrv_kinase-like_dom_sf"/>
</dbReference>
<dbReference type="NCBIfam" id="TIGR00222">
    <property type="entry name" value="panB"/>
    <property type="match status" value="1"/>
</dbReference>
<dbReference type="NCBIfam" id="NF001452">
    <property type="entry name" value="PRK00311.1"/>
    <property type="match status" value="1"/>
</dbReference>
<dbReference type="PANTHER" id="PTHR20881">
    <property type="entry name" value="3-METHYL-2-OXOBUTANOATE HYDROXYMETHYLTRANSFERASE"/>
    <property type="match status" value="1"/>
</dbReference>
<dbReference type="PANTHER" id="PTHR20881:SF0">
    <property type="entry name" value="3-METHYL-2-OXOBUTANOATE HYDROXYMETHYLTRANSFERASE"/>
    <property type="match status" value="1"/>
</dbReference>
<dbReference type="Pfam" id="PF02548">
    <property type="entry name" value="Pantoate_transf"/>
    <property type="match status" value="1"/>
</dbReference>
<dbReference type="PIRSF" id="PIRSF000388">
    <property type="entry name" value="Pantoate_hydroxy_MeTrfase"/>
    <property type="match status" value="1"/>
</dbReference>
<dbReference type="SUPFAM" id="SSF51621">
    <property type="entry name" value="Phosphoenolpyruvate/pyruvate domain"/>
    <property type="match status" value="1"/>
</dbReference>